<feature type="chain" id="PRO_0000371387" description="Probable polyketide synthase 25">
    <location>
        <begin position="1"/>
        <end position="2380"/>
    </location>
</feature>
<feature type="domain" description="Ketosynthase family 3 (KS3)" evidence="3">
    <location>
        <begin position="31"/>
        <end position="457"/>
    </location>
</feature>
<feature type="domain" description="PKS/mFAS DH" evidence="4">
    <location>
        <begin position="948"/>
        <end position="1234"/>
    </location>
</feature>
<feature type="domain" description="Carrier" evidence="2">
    <location>
        <begin position="2299"/>
        <end position="2376"/>
    </location>
</feature>
<feature type="region of interest" description="Disordered" evidence="6">
    <location>
        <begin position="1"/>
        <end position="29"/>
    </location>
</feature>
<feature type="region of interest" description="Acyl/malonyl transferase">
    <location>
        <begin position="649"/>
        <end position="682"/>
    </location>
</feature>
<feature type="region of interest" description="N-terminal hotdog fold" evidence="4">
    <location>
        <begin position="948"/>
        <end position="1070"/>
    </location>
</feature>
<feature type="region of interest" description="C-terminal hotdog fold" evidence="4">
    <location>
        <begin position="1085"/>
        <end position="1234"/>
    </location>
</feature>
<feature type="compositionally biased region" description="Polar residues" evidence="6">
    <location>
        <begin position="1"/>
        <end position="18"/>
    </location>
</feature>
<feature type="active site" description="For beta-ketoacyl synthase activity" evidence="3">
    <location>
        <position position="198"/>
    </location>
</feature>
<feature type="active site" description="For beta-ketoacyl synthase activity" evidence="3">
    <location>
        <position position="340"/>
    </location>
</feature>
<feature type="active site" description="For beta-ketoacyl synthase activity" evidence="3">
    <location>
        <position position="380"/>
    </location>
</feature>
<feature type="active site" description="For acyl/malonyl transferase activity" evidence="5">
    <location>
        <position position="659"/>
    </location>
</feature>
<feature type="active site" description="Proton acceptor; for dehydratase activity" evidence="4">
    <location>
        <position position="982"/>
    </location>
</feature>
<feature type="active site" description="Proton donor; for dehydratase activity" evidence="4">
    <location>
        <position position="1148"/>
    </location>
</feature>
<feature type="modified residue" description="O-(pantetheine 4'-phosphoryl)serine" evidence="2">
    <location>
        <position position="2336"/>
    </location>
</feature>
<proteinExistence type="inferred from homology"/>
<organism>
    <name type="scientific">Dictyostelium discoideum</name>
    <name type="common">Social amoeba</name>
    <dbReference type="NCBI Taxonomy" id="44689"/>
    <lineage>
        <taxon>Eukaryota</taxon>
        <taxon>Amoebozoa</taxon>
        <taxon>Evosea</taxon>
        <taxon>Eumycetozoa</taxon>
        <taxon>Dictyostelia</taxon>
        <taxon>Dictyosteliales</taxon>
        <taxon>Dictyosteliaceae</taxon>
        <taxon>Dictyostelium</taxon>
    </lineage>
</organism>
<name>PKS25_DICDI</name>
<keyword id="KW-0596">Phosphopantetheine</keyword>
<keyword id="KW-0597">Phosphoprotein</keyword>
<keyword id="KW-1185">Reference proteome</keyword>
<keyword id="KW-0808">Transferase</keyword>
<sequence length="2380" mass="269876">MDNSYLNNPQFDINNGNKEVTDDDNNKNNQDNLVAIVGVGFRLPSGENERNNTPQALWNNLINGFDGVVKTSERFNDNFFKNHEIANNYSGLLPLDEVKSFDPLFFGITPNEAQTIDPHQRLLLKCTWEALEDSLIDPISIKGTDTSVFIGSSTNDYLTLNRNEVKSNVFGSMAHSIANRVSYCYDLHGNSITLDTACSSSLNAIALGYDSIKNKKSKMSIVGGVNILLDPYPYKAFSILNMLSKSNGRCKSFDASADGFVRGECIGVVILKNLKDAIKDGNRIYCTINGASANVDGIGYSDKSNFYSPSSISQSENLKNAIQSTNGTVKPSDIDYVEAHGTGTPNGDPVETEGISKVFKDTRSTDTPLLIGSFKSNIGHCEAASGIASLIKCCLMYKNKCFAPNIHFKTPNPAIKFKEWNLKVVTEPIPFNENKNTSMIINNFGVTGSNCCLVLSQFNNTNKQKQQMKTKINNYLIPFSANSVESLKKYQSLIINSKENELKYSFEEFVKNQVFIKPTSLYQRSVIVAKDWNDFNNVENQVKYQTSSSTSSNITITNKNNNPITVFVFCGQGSQYNTMALELYKNEKVFRNSMDMLDNKMKNYFGYSILEKLRAIQDSDKRSVHEQTMAQPSTVIIQVSLYELYKHWGIKASFMLGHSLGEVTTAYCSGMIDIDQLCYLIYHRSTLQIRTNGLGKMLSINISSDEYKTNYMSRYPTIEIACYNSPSSIVIAGNEQILNEISKELKEKEIFSAMLGSLSSFHTSSQNIIKDDILNLNIQSSQPVIPTFSTVTSNLFNESTIFDSEYFFDNISKPVSFTQTISNLYKHIEDNQIGSNIVFIEIAPHPTLSFYLKQMIPKQSQYFRNGESISVYSTLHKKKNDVEEFQKSISQLFCDDAYDINFKCQFNNINSNIEAISNFNLPLYQWDDQHYWLNKSIEHKNNLIGPPISILGNSMQDSNPFIKSYQTIIDTGKDAFKYLKGHNVSDKCYFPGAGYIDNLLKLYPNQDLTINSIEFKTPLILSDDNGQFLQTNVYQTGKSDYRAQFHFKDNRTNVWVQTCTANFQLYNNGKVDKLNLEEIKSTKCNLSSIPWDKFYPHIKNRTGLNYKDKFQNTIECYLGDNCSLTEISLELPENFHDQESFFNTPILDICFHGSIVLIKDNCKLVLDKIDGFKLYTSNIPKNRFDHLSIFVYTTMKSTKSNSYNSTYTVMLEDGTVILEVENLICTSLTPVKDPLLIEIPTDMYYTPYLQSKDSQIQSPLEFKSIYQNNQDNDSLLIPNVVLETIKPLINEQMEFRILEFGGNNLSNSTLLLNSINSLLEENPHYEIDIEYTWSDNNSSILKDAKLELSKVDKGYLSILYRSLGLDVDNSLLEKQKLNPSYYDLIIVSNISNLTKDIKYSLNQIYQILTPNGNLIINEQQPNNENNENNEDSLKNLLVNCNFNSDIMMKSSSVSDSDIKSIIIQAQKPSLKLQPKTINTFDQVILYCNQDEQFQQQQQLINKFESHYNNNCKIIKVSTIEEFYKLSTTITNNSIIYFIKSIEQLTLENFKSITFEYVQINQKLYEFKSKCTHVLITYDSQSSNYLSSSILGAARYFDEIPTLQLFTFDFDKDSLINLDISVIDHLIDPKQNTLIEFFIKKNGKVYFERFKKGLKKNSFKSESYHQITNEQEILISKLDENLDYQLKSKDSILKPYDIEVEIKATGLNYKDYLVYSGLIKLKGDSVDFGLDFSGRVSRVGIKSSKEFKVGDEVYGIGQSTSSSHIIIDSMHACHKPSKITHVQAASIPAVYATSIHSLYNIGNLREGESILIHSGSGGVGLSALEILKSNNHSSPIFVTVGSEEKKQYLINTYGNLITGIYSTRDTNYQKQIKNKLIELGYETHGVDLIINTLSSEFMDSNFKCLNPEGRIVDLTITHLNPNEFIDNNKFKYNFGYHNIELYYCEKPTIKKLLQSISKSIENNTLNYLIPITEFSNSNIKKAIEYINERKHVGKIVISHDTDITNKLIENQPKIDYSLLKSNYKIKNLGKNVLVTGQTGLILDIINWIMKYNSTVENIIILSKSSMKWEMEFLINNNKTKIKFYYKRCDIGGDSDSINKTFDKLFTENPTITNIDSIFHFAVVQITRKVKDIDMKSLNISHDAKTIGAINLHNQSIKRDWKLSNFILASSILSKVGSLDQCGYVSACCVLDSFSKYRLSIGLPALSINIGAMGGSGMVARSELVETVLNGQGYNLTSTNQLLGTIDLLIQNPGQESNNLMVGNFNFPVFNNFKQKIHQKFDFIFNALDSNSENGDGSNIKNSTNIKDKFLNKVSEFLSIDSSKINNDIKLMNYGADSLITVQLKNWVDKEWSPNLITIHQIQSNSIGMVCQIINDNFEKKK</sequence>
<accession>Q54KU3</accession>
<comment type="function">
    <text evidence="1">Probable polyketide synthase.</text>
</comment>
<comment type="cofactor">
    <cofactor evidence="1">
        <name>pantetheine 4'-phosphate</name>
        <dbReference type="ChEBI" id="CHEBI:47942"/>
    </cofactor>
    <text evidence="1">Binds 1 phosphopantetheine covalently.</text>
</comment>
<comment type="domain">
    <text evidence="1">Modular protein that is responsible for the completion of one condensation-processing cycle. The beta-ketoacyl synthase region is responsible for the actual condensation reaction while the acyl/malonyl transferase region is responsible for incorporating carboxylic acids units onto an acyl carrier protein (ACP) domain (By similarity).</text>
</comment>
<comment type="miscellaneous">
    <text>Encoded by one of the numerous copies of polyketide synthase genes and clustered as a pair pks24/pks25 in chromosome 4.</text>
</comment>
<protein>
    <recommendedName>
        <fullName>Probable polyketide synthase 25</fullName>
        <shortName>dipks25</shortName>
        <ecNumber>2.3.1.-</ecNumber>
    </recommendedName>
</protein>
<gene>
    <name type="primary">pks25</name>
    <name type="ORF">DDB_G0287095</name>
</gene>
<evidence type="ECO:0000250" key="1"/>
<evidence type="ECO:0000255" key="2">
    <source>
        <dbReference type="PROSITE-ProRule" id="PRU00258"/>
    </source>
</evidence>
<evidence type="ECO:0000255" key="3">
    <source>
        <dbReference type="PROSITE-ProRule" id="PRU01348"/>
    </source>
</evidence>
<evidence type="ECO:0000255" key="4">
    <source>
        <dbReference type="PROSITE-ProRule" id="PRU01363"/>
    </source>
</evidence>
<evidence type="ECO:0000255" key="5">
    <source>
        <dbReference type="PROSITE-ProRule" id="PRU10022"/>
    </source>
</evidence>
<evidence type="ECO:0000256" key="6">
    <source>
        <dbReference type="SAM" id="MobiDB-lite"/>
    </source>
</evidence>
<reference key="1">
    <citation type="journal article" date="2005" name="Nature">
        <title>The genome of the social amoeba Dictyostelium discoideum.</title>
        <authorList>
            <person name="Eichinger L."/>
            <person name="Pachebat J.A."/>
            <person name="Gloeckner G."/>
            <person name="Rajandream M.A."/>
            <person name="Sucgang R."/>
            <person name="Berriman M."/>
            <person name="Song J."/>
            <person name="Olsen R."/>
            <person name="Szafranski K."/>
            <person name="Xu Q."/>
            <person name="Tunggal B."/>
            <person name="Kummerfeld S."/>
            <person name="Madera M."/>
            <person name="Konfortov B.A."/>
            <person name="Rivero F."/>
            <person name="Bankier A.T."/>
            <person name="Lehmann R."/>
            <person name="Hamlin N."/>
            <person name="Davies R."/>
            <person name="Gaudet P."/>
            <person name="Fey P."/>
            <person name="Pilcher K."/>
            <person name="Chen G."/>
            <person name="Saunders D."/>
            <person name="Sodergren E.J."/>
            <person name="Davis P."/>
            <person name="Kerhornou A."/>
            <person name="Nie X."/>
            <person name="Hall N."/>
            <person name="Anjard C."/>
            <person name="Hemphill L."/>
            <person name="Bason N."/>
            <person name="Farbrother P."/>
            <person name="Desany B."/>
            <person name="Just E."/>
            <person name="Morio T."/>
            <person name="Rost R."/>
            <person name="Churcher C.M."/>
            <person name="Cooper J."/>
            <person name="Haydock S."/>
            <person name="van Driessche N."/>
            <person name="Cronin A."/>
            <person name="Goodhead I."/>
            <person name="Muzny D.M."/>
            <person name="Mourier T."/>
            <person name="Pain A."/>
            <person name="Lu M."/>
            <person name="Harper D."/>
            <person name="Lindsay R."/>
            <person name="Hauser H."/>
            <person name="James K.D."/>
            <person name="Quiles M."/>
            <person name="Madan Babu M."/>
            <person name="Saito T."/>
            <person name="Buchrieser C."/>
            <person name="Wardroper A."/>
            <person name="Felder M."/>
            <person name="Thangavelu M."/>
            <person name="Johnson D."/>
            <person name="Knights A."/>
            <person name="Loulseged H."/>
            <person name="Mungall K.L."/>
            <person name="Oliver K."/>
            <person name="Price C."/>
            <person name="Quail M.A."/>
            <person name="Urushihara H."/>
            <person name="Hernandez J."/>
            <person name="Rabbinowitsch E."/>
            <person name="Steffen D."/>
            <person name="Sanders M."/>
            <person name="Ma J."/>
            <person name="Kohara Y."/>
            <person name="Sharp S."/>
            <person name="Simmonds M.N."/>
            <person name="Spiegler S."/>
            <person name="Tivey A."/>
            <person name="Sugano S."/>
            <person name="White B."/>
            <person name="Walker D."/>
            <person name="Woodward J.R."/>
            <person name="Winckler T."/>
            <person name="Tanaka Y."/>
            <person name="Shaulsky G."/>
            <person name="Schleicher M."/>
            <person name="Weinstock G.M."/>
            <person name="Rosenthal A."/>
            <person name="Cox E.C."/>
            <person name="Chisholm R.L."/>
            <person name="Gibbs R.A."/>
            <person name="Loomis W.F."/>
            <person name="Platzer M."/>
            <person name="Kay R.R."/>
            <person name="Williams J.G."/>
            <person name="Dear P.H."/>
            <person name="Noegel A.A."/>
            <person name="Barrell B.G."/>
            <person name="Kuspa A."/>
        </authorList>
    </citation>
    <scope>NUCLEOTIDE SEQUENCE [LARGE SCALE GENOMIC DNA]</scope>
    <source>
        <strain>AX4</strain>
    </source>
</reference>
<reference key="2">
    <citation type="journal article" date="2007" name="Bioinformatics">
        <title>Polyketide synthase genes and the natural products potential of Dictyostelium discoideum.</title>
        <authorList>
            <person name="Zucko J."/>
            <person name="Skunca N."/>
            <person name="Curk T."/>
            <person name="Zupan B."/>
            <person name="Long P.F."/>
            <person name="Cullum J."/>
            <person name="Kessin R.H."/>
            <person name="Hranueli D."/>
        </authorList>
    </citation>
    <scope>IDENTIFICATION</scope>
</reference>
<dbReference type="EC" id="2.3.1.-"/>
<dbReference type="EMBL" id="AAFI02000096">
    <property type="protein sequence ID" value="EAL63912.1"/>
    <property type="molecule type" value="Genomic_DNA"/>
</dbReference>
<dbReference type="RefSeq" id="XP_637427.1">
    <property type="nucleotide sequence ID" value="XM_632335.1"/>
</dbReference>
<dbReference type="SMR" id="Q54KU3"/>
<dbReference type="STRING" id="44689.Q54KU3"/>
<dbReference type="GlyGen" id="Q54KU3">
    <property type="glycosylation" value="1 site"/>
</dbReference>
<dbReference type="PaxDb" id="44689-DDB0230080"/>
<dbReference type="EnsemblProtists" id="EAL63912">
    <property type="protein sequence ID" value="EAL63912"/>
    <property type="gene ID" value="DDB_G0287095"/>
</dbReference>
<dbReference type="GeneID" id="8625960"/>
<dbReference type="KEGG" id="ddi:DDB_G0287095"/>
<dbReference type="dictyBase" id="DDB_G0287095">
    <property type="gene designation" value="pks25"/>
</dbReference>
<dbReference type="VEuPathDB" id="AmoebaDB:DDB_G0287095"/>
<dbReference type="eggNOG" id="KOG1202">
    <property type="taxonomic scope" value="Eukaryota"/>
</dbReference>
<dbReference type="HOGENOM" id="CLU_000022_31_0_1"/>
<dbReference type="InParanoid" id="Q54KU3"/>
<dbReference type="PhylomeDB" id="Q54KU3"/>
<dbReference type="PRO" id="PR:Q54KU3"/>
<dbReference type="Proteomes" id="UP000002195">
    <property type="component" value="Chromosome 4"/>
</dbReference>
<dbReference type="GO" id="GO:0004315">
    <property type="term" value="F:3-oxoacyl-[acyl-carrier-protein] synthase activity"/>
    <property type="evidence" value="ECO:0007669"/>
    <property type="project" value="InterPro"/>
</dbReference>
<dbReference type="GO" id="GO:0016491">
    <property type="term" value="F:oxidoreductase activity"/>
    <property type="evidence" value="ECO:0007669"/>
    <property type="project" value="InterPro"/>
</dbReference>
<dbReference type="GO" id="GO:0006633">
    <property type="term" value="P:fatty acid biosynthetic process"/>
    <property type="evidence" value="ECO:0000318"/>
    <property type="project" value="GO_Central"/>
</dbReference>
<dbReference type="CDD" id="cd05195">
    <property type="entry name" value="enoyl_red"/>
    <property type="match status" value="1"/>
</dbReference>
<dbReference type="CDD" id="cd08954">
    <property type="entry name" value="KR_1_FAS_SDR_x"/>
    <property type="match status" value="1"/>
</dbReference>
<dbReference type="CDD" id="cd00833">
    <property type="entry name" value="PKS"/>
    <property type="match status" value="1"/>
</dbReference>
<dbReference type="Gene3D" id="3.30.70.3290">
    <property type="match status" value="1"/>
</dbReference>
<dbReference type="Gene3D" id="3.40.47.10">
    <property type="match status" value="1"/>
</dbReference>
<dbReference type="Gene3D" id="3.40.366.10">
    <property type="entry name" value="Malonyl-Coenzyme A Acyl Carrier Protein, domain 2"/>
    <property type="match status" value="1"/>
</dbReference>
<dbReference type="Gene3D" id="3.90.180.10">
    <property type="entry name" value="Medium-chain alcohol dehydrogenases, catalytic domain"/>
    <property type="match status" value="1"/>
</dbReference>
<dbReference type="Gene3D" id="3.40.50.720">
    <property type="entry name" value="NAD(P)-binding Rossmann-like Domain"/>
    <property type="match status" value="2"/>
</dbReference>
<dbReference type="Gene3D" id="3.10.129.110">
    <property type="entry name" value="Polyketide synthase dehydratase"/>
    <property type="match status" value="1"/>
</dbReference>
<dbReference type="Gene3D" id="3.40.50.150">
    <property type="entry name" value="Vaccinia Virus protein VP39"/>
    <property type="match status" value="1"/>
</dbReference>
<dbReference type="InterPro" id="IPR001227">
    <property type="entry name" value="Ac_transferase_dom_sf"/>
</dbReference>
<dbReference type="InterPro" id="IPR036736">
    <property type="entry name" value="ACP-like_sf"/>
</dbReference>
<dbReference type="InterPro" id="IPR014043">
    <property type="entry name" value="Acyl_transferase_dom"/>
</dbReference>
<dbReference type="InterPro" id="IPR016035">
    <property type="entry name" value="Acyl_Trfase/lysoPLipase"/>
</dbReference>
<dbReference type="InterPro" id="IPR013154">
    <property type="entry name" value="ADH-like_N"/>
</dbReference>
<dbReference type="InterPro" id="IPR011032">
    <property type="entry name" value="GroES-like_sf"/>
</dbReference>
<dbReference type="InterPro" id="IPR018201">
    <property type="entry name" value="Ketoacyl_synth_AS"/>
</dbReference>
<dbReference type="InterPro" id="IPR014031">
    <property type="entry name" value="Ketoacyl_synth_C"/>
</dbReference>
<dbReference type="InterPro" id="IPR014030">
    <property type="entry name" value="Ketoacyl_synth_N"/>
</dbReference>
<dbReference type="InterPro" id="IPR016036">
    <property type="entry name" value="Malonyl_transacylase_ACP-bd"/>
</dbReference>
<dbReference type="InterPro" id="IPR036291">
    <property type="entry name" value="NAD(P)-bd_dom_sf"/>
</dbReference>
<dbReference type="InterPro" id="IPR032821">
    <property type="entry name" value="PKS_assoc"/>
</dbReference>
<dbReference type="InterPro" id="IPR020841">
    <property type="entry name" value="PKS_Beta-ketoAc_synthase_dom"/>
</dbReference>
<dbReference type="InterPro" id="IPR042104">
    <property type="entry name" value="PKS_dehydratase_sf"/>
</dbReference>
<dbReference type="InterPro" id="IPR049551">
    <property type="entry name" value="PKS_DH_C"/>
</dbReference>
<dbReference type="InterPro" id="IPR020843">
    <property type="entry name" value="PKS_ER"/>
</dbReference>
<dbReference type="InterPro" id="IPR013968">
    <property type="entry name" value="PKS_KR"/>
</dbReference>
<dbReference type="InterPro" id="IPR049900">
    <property type="entry name" value="PKS_mFAS_DH"/>
</dbReference>
<dbReference type="InterPro" id="IPR050444">
    <property type="entry name" value="Polyketide_Synthase"/>
</dbReference>
<dbReference type="InterPro" id="IPR009081">
    <property type="entry name" value="PP-bd_ACP"/>
</dbReference>
<dbReference type="InterPro" id="IPR029063">
    <property type="entry name" value="SAM-dependent_MTases_sf"/>
</dbReference>
<dbReference type="InterPro" id="IPR016039">
    <property type="entry name" value="Thiolase-like"/>
</dbReference>
<dbReference type="PANTHER" id="PTHR45681:SF4">
    <property type="entry name" value="BETA-KETOACYL SYNTHASE FAMILY PROTEIN-RELATED"/>
    <property type="match status" value="1"/>
</dbReference>
<dbReference type="PANTHER" id="PTHR45681">
    <property type="entry name" value="POLYKETIDE SYNTHASE 44-RELATED"/>
    <property type="match status" value="1"/>
</dbReference>
<dbReference type="Pfam" id="PF23297">
    <property type="entry name" value="ACP_SdgA_C"/>
    <property type="match status" value="1"/>
</dbReference>
<dbReference type="Pfam" id="PF00698">
    <property type="entry name" value="Acyl_transf_1"/>
    <property type="match status" value="1"/>
</dbReference>
<dbReference type="Pfam" id="PF08240">
    <property type="entry name" value="ADH_N"/>
    <property type="match status" value="1"/>
</dbReference>
<dbReference type="Pfam" id="PF13602">
    <property type="entry name" value="ADH_zinc_N_2"/>
    <property type="match status" value="1"/>
</dbReference>
<dbReference type="Pfam" id="PF16197">
    <property type="entry name" value="KAsynt_C_assoc"/>
    <property type="match status" value="1"/>
</dbReference>
<dbReference type="Pfam" id="PF00109">
    <property type="entry name" value="ketoacyl-synt"/>
    <property type="match status" value="1"/>
</dbReference>
<dbReference type="Pfam" id="PF02801">
    <property type="entry name" value="Ketoacyl-synt_C"/>
    <property type="match status" value="1"/>
</dbReference>
<dbReference type="Pfam" id="PF08659">
    <property type="entry name" value="KR"/>
    <property type="match status" value="1"/>
</dbReference>
<dbReference type="Pfam" id="PF14765">
    <property type="entry name" value="PS-DH"/>
    <property type="match status" value="1"/>
</dbReference>
<dbReference type="SMART" id="SM00827">
    <property type="entry name" value="PKS_AT"/>
    <property type="match status" value="1"/>
</dbReference>
<dbReference type="SMART" id="SM00829">
    <property type="entry name" value="PKS_ER"/>
    <property type="match status" value="1"/>
</dbReference>
<dbReference type="SMART" id="SM00822">
    <property type="entry name" value="PKS_KR"/>
    <property type="match status" value="1"/>
</dbReference>
<dbReference type="SMART" id="SM00825">
    <property type="entry name" value="PKS_KS"/>
    <property type="match status" value="1"/>
</dbReference>
<dbReference type="SUPFAM" id="SSF47336">
    <property type="entry name" value="ACP-like"/>
    <property type="match status" value="1"/>
</dbReference>
<dbReference type="SUPFAM" id="SSF52151">
    <property type="entry name" value="FabD/lysophospholipase-like"/>
    <property type="match status" value="1"/>
</dbReference>
<dbReference type="SUPFAM" id="SSF50129">
    <property type="entry name" value="GroES-like"/>
    <property type="match status" value="1"/>
</dbReference>
<dbReference type="SUPFAM" id="SSF51735">
    <property type="entry name" value="NAD(P)-binding Rossmann-fold domains"/>
    <property type="match status" value="2"/>
</dbReference>
<dbReference type="SUPFAM" id="SSF55048">
    <property type="entry name" value="Probable ACP-binding domain of malonyl-CoA ACP transacylase"/>
    <property type="match status" value="1"/>
</dbReference>
<dbReference type="SUPFAM" id="SSF53335">
    <property type="entry name" value="S-adenosyl-L-methionine-dependent methyltransferases"/>
    <property type="match status" value="1"/>
</dbReference>
<dbReference type="SUPFAM" id="SSF53901">
    <property type="entry name" value="Thiolase-like"/>
    <property type="match status" value="1"/>
</dbReference>
<dbReference type="PROSITE" id="PS50075">
    <property type="entry name" value="CARRIER"/>
    <property type="match status" value="1"/>
</dbReference>
<dbReference type="PROSITE" id="PS00606">
    <property type="entry name" value="KS3_1"/>
    <property type="match status" value="1"/>
</dbReference>
<dbReference type="PROSITE" id="PS52004">
    <property type="entry name" value="KS3_2"/>
    <property type="match status" value="1"/>
</dbReference>
<dbReference type="PROSITE" id="PS52019">
    <property type="entry name" value="PKS_MFAS_DH"/>
    <property type="match status" value="1"/>
</dbReference>